<reference key="1">
    <citation type="journal article" date="1996" name="Science">
        <title>Complete genome sequence of the methanogenic archaeon, Methanococcus jannaschii.</title>
        <authorList>
            <person name="Bult C.J."/>
            <person name="White O."/>
            <person name="Olsen G.J."/>
            <person name="Zhou L."/>
            <person name="Fleischmann R.D."/>
            <person name="Sutton G.G."/>
            <person name="Blake J.A."/>
            <person name="FitzGerald L.M."/>
            <person name="Clayton R.A."/>
            <person name="Gocayne J.D."/>
            <person name="Kerlavage A.R."/>
            <person name="Dougherty B.A."/>
            <person name="Tomb J.-F."/>
            <person name="Adams M.D."/>
            <person name="Reich C.I."/>
            <person name="Overbeek R."/>
            <person name="Kirkness E.F."/>
            <person name="Weinstock K.G."/>
            <person name="Merrick J.M."/>
            <person name="Glodek A."/>
            <person name="Scott J.L."/>
            <person name="Geoghagen N.S.M."/>
            <person name="Weidman J.F."/>
            <person name="Fuhrmann J.L."/>
            <person name="Nguyen D."/>
            <person name="Utterback T.R."/>
            <person name="Kelley J.M."/>
            <person name="Peterson J.D."/>
            <person name="Sadow P.W."/>
            <person name="Hanna M.C."/>
            <person name="Cotton M.D."/>
            <person name="Roberts K.M."/>
            <person name="Hurst M.A."/>
            <person name="Kaine B.P."/>
            <person name="Borodovsky M."/>
            <person name="Klenk H.-P."/>
            <person name="Fraser C.M."/>
            <person name="Smith H.O."/>
            <person name="Woese C.R."/>
            <person name="Venter J.C."/>
        </authorList>
    </citation>
    <scope>NUCLEOTIDE SEQUENCE [LARGE SCALE GENOMIC DNA]</scope>
    <source>
        <strain>ATCC 43067 / DSM 2661 / JAL-1 / JCM 10045 / NBRC 100440</strain>
    </source>
</reference>
<accession>Q58034</accession>
<dbReference type="EC" id="4.2.1.32" evidence="1"/>
<dbReference type="EMBL" id="L77117">
    <property type="protein sequence ID" value="AAB98612.1"/>
    <property type="molecule type" value="Genomic_DNA"/>
</dbReference>
<dbReference type="PIR" id="A64377">
    <property type="entry name" value="A64377"/>
</dbReference>
<dbReference type="RefSeq" id="WP_010870122.1">
    <property type="nucleotide sequence ID" value="NC_000909.1"/>
</dbReference>
<dbReference type="PDB" id="5DNI">
    <property type="method" value="X-ray"/>
    <property type="resolution" value="2.30 A"/>
    <property type="chains" value="A/B=1-179"/>
</dbReference>
<dbReference type="PDB" id="7XKY">
    <property type="method" value="X-ray"/>
    <property type="resolution" value="2.46 A"/>
    <property type="chains" value="B=1-195"/>
</dbReference>
<dbReference type="PDBsum" id="5DNI"/>
<dbReference type="PDBsum" id="7XKY"/>
<dbReference type="SMR" id="Q58034"/>
<dbReference type="FunCoup" id="Q58034">
    <property type="interactions" value="94"/>
</dbReference>
<dbReference type="STRING" id="243232.MJ_0617"/>
<dbReference type="PaxDb" id="243232-MJ_0617"/>
<dbReference type="EnsemblBacteria" id="AAB98612">
    <property type="protein sequence ID" value="AAB98612"/>
    <property type="gene ID" value="MJ_0617"/>
</dbReference>
<dbReference type="GeneID" id="1451483"/>
<dbReference type="KEGG" id="mja:MJ_0617"/>
<dbReference type="eggNOG" id="arCOG04406">
    <property type="taxonomic scope" value="Archaea"/>
</dbReference>
<dbReference type="HOGENOM" id="CLU_098588_0_0_2"/>
<dbReference type="InParanoid" id="Q58034"/>
<dbReference type="OrthoDB" id="34134at2157"/>
<dbReference type="PhylomeDB" id="Q58034"/>
<dbReference type="Proteomes" id="UP000000805">
    <property type="component" value="Chromosome"/>
</dbReference>
<dbReference type="GO" id="GO:0008730">
    <property type="term" value="F:L(+)-tartrate dehydratase activity"/>
    <property type="evidence" value="ECO:0007669"/>
    <property type="project" value="UniProtKB-EC"/>
</dbReference>
<dbReference type="Gene3D" id="3.20.130.10">
    <property type="entry name" value="Fe-S hydro-lyase, tartrate dehydratase beta-type, catalytic domain"/>
    <property type="match status" value="1"/>
</dbReference>
<dbReference type="InterPro" id="IPR004647">
    <property type="entry name" value="Fe-S_hydro-lyase_TtdB-typ_cat"/>
</dbReference>
<dbReference type="InterPro" id="IPR036660">
    <property type="entry name" value="Fe-S_hydroAse_TtdB_cat_sf"/>
</dbReference>
<dbReference type="NCBIfam" id="TIGR00723">
    <property type="entry name" value="ttdB_fumA_fumB"/>
    <property type="match status" value="1"/>
</dbReference>
<dbReference type="PANTHER" id="PTHR43351">
    <property type="entry name" value="L(+)-TARTRATE DEHYDRATASE SUBUNIT BETA"/>
    <property type="match status" value="1"/>
</dbReference>
<dbReference type="PANTHER" id="PTHR43351:SF2">
    <property type="entry name" value="L(+)-TARTRATE DEHYDRATASE SUBUNIT BETA-RELATED"/>
    <property type="match status" value="1"/>
</dbReference>
<dbReference type="Pfam" id="PF05683">
    <property type="entry name" value="Fumerase_C"/>
    <property type="match status" value="1"/>
</dbReference>
<dbReference type="SUPFAM" id="SSF117457">
    <property type="entry name" value="FumA C-terminal domain-like"/>
    <property type="match status" value="1"/>
</dbReference>
<gene>
    <name type="ordered locus">MJ0617</name>
</gene>
<evidence type="ECO:0000250" key="1">
    <source>
        <dbReference type="UniProtKB" id="P0AC35"/>
    </source>
</evidence>
<evidence type="ECO:0000255" key="2"/>
<evidence type="ECO:0000305" key="3"/>
<evidence type="ECO:0007829" key="4">
    <source>
        <dbReference type="PDB" id="5DNI"/>
    </source>
</evidence>
<evidence type="ECO:0007829" key="5">
    <source>
        <dbReference type="PDB" id="7XKY"/>
    </source>
</evidence>
<feature type="chain" id="PRO_0000195662" description="Putative L(+)-tartrate dehydratase subunit beta">
    <location>
        <begin position="1"/>
        <end position="195"/>
    </location>
</feature>
<feature type="active site" evidence="2">
    <location>
        <position position="36"/>
    </location>
</feature>
<feature type="binding site" evidence="2">
    <location>
        <position position="104"/>
    </location>
    <ligand>
        <name>substrate</name>
    </ligand>
</feature>
<feature type="strand" evidence="4">
    <location>
        <begin position="2"/>
        <end position="7"/>
    </location>
</feature>
<feature type="helix" evidence="4">
    <location>
        <begin position="10"/>
        <end position="15"/>
    </location>
</feature>
<feature type="strand" evidence="4">
    <location>
        <begin position="21"/>
        <end position="30"/>
    </location>
</feature>
<feature type="helix" evidence="4">
    <location>
        <begin position="33"/>
        <end position="44"/>
    </location>
</feature>
<feature type="strand" evidence="4">
    <location>
        <begin position="57"/>
        <end position="59"/>
    </location>
</feature>
<feature type="strand" evidence="4">
    <location>
        <begin position="64"/>
        <end position="68"/>
    </location>
</feature>
<feature type="strand" evidence="4">
    <location>
        <begin position="71"/>
        <end position="76"/>
    </location>
</feature>
<feature type="helix" evidence="4">
    <location>
        <begin position="82"/>
        <end position="85"/>
    </location>
</feature>
<feature type="turn" evidence="4">
    <location>
        <begin position="86"/>
        <end position="88"/>
    </location>
</feature>
<feature type="helix" evidence="4">
    <location>
        <begin position="89"/>
        <end position="96"/>
    </location>
</feature>
<feature type="strand" evidence="4">
    <location>
        <begin position="100"/>
        <end position="105"/>
    </location>
</feature>
<feature type="helix" evidence="4">
    <location>
        <begin position="111"/>
        <end position="118"/>
    </location>
</feature>
<feature type="strand" evidence="4">
    <location>
        <begin position="121"/>
        <end position="124"/>
    </location>
</feature>
<feature type="helix" evidence="4">
    <location>
        <begin position="130"/>
        <end position="133"/>
    </location>
</feature>
<feature type="helix" evidence="4">
    <location>
        <begin position="134"/>
        <end position="136"/>
    </location>
</feature>
<feature type="strand" evidence="4">
    <location>
        <begin position="137"/>
        <end position="145"/>
    </location>
</feature>
<feature type="helix" evidence="4">
    <location>
        <begin position="146"/>
        <end position="149"/>
    </location>
</feature>
<feature type="turn" evidence="4">
    <location>
        <begin position="151"/>
        <end position="153"/>
    </location>
</feature>
<feature type="strand" evidence="4">
    <location>
        <begin position="154"/>
        <end position="170"/>
    </location>
</feature>
<feature type="helix" evidence="5">
    <location>
        <begin position="177"/>
        <end position="190"/>
    </location>
</feature>
<proteinExistence type="evidence at protein level"/>
<protein>
    <recommendedName>
        <fullName evidence="1">Putative L(+)-tartrate dehydratase subunit beta</fullName>
        <shortName evidence="1">L-TTD beta</shortName>
        <ecNumber evidence="1">4.2.1.32</ecNumber>
    </recommendedName>
</protein>
<comment type="catalytic activity">
    <reaction evidence="1">
        <text>(2R,3R)-tartrate = oxaloacetate + H2O</text>
        <dbReference type="Rhea" id="RHEA:15413"/>
        <dbReference type="ChEBI" id="CHEBI:15377"/>
        <dbReference type="ChEBI" id="CHEBI:16452"/>
        <dbReference type="ChEBI" id="CHEBI:30924"/>
        <dbReference type="EC" id="4.2.1.32"/>
    </reaction>
</comment>
<comment type="subunit">
    <text evidence="1">Heterotetramer of two alpha and two beta subunits.</text>
</comment>
<comment type="similarity">
    <text evidence="3">Belongs to the class-I fumarase family.</text>
</comment>
<name>TTDB_METJA</name>
<sequence>MEYTFNKLTKKDVKKLKVGDIVYLNGKIYTARDEAHLKIIEMLKSNEKLPFDLNESIIYHAGPIMKKVNDSWVCVSIGPTTSARMNDVEEEFIKLTNISAIVGKGGMKKELLKTFEDYGVVYLAAPGGCAALLANSVKRVDNVYFLDELGMPEAVWELEVNNFGPLIVAMDSHGNSIYEEVNKKVYEKLNELIGL</sequence>
<keyword id="KW-0002">3D-structure</keyword>
<keyword id="KW-0456">Lyase</keyword>
<keyword id="KW-1185">Reference proteome</keyword>
<organism>
    <name type="scientific">Methanocaldococcus jannaschii (strain ATCC 43067 / DSM 2661 / JAL-1 / JCM 10045 / NBRC 100440)</name>
    <name type="common">Methanococcus jannaschii</name>
    <dbReference type="NCBI Taxonomy" id="243232"/>
    <lineage>
        <taxon>Archaea</taxon>
        <taxon>Methanobacteriati</taxon>
        <taxon>Methanobacteriota</taxon>
        <taxon>Methanomada group</taxon>
        <taxon>Methanococci</taxon>
        <taxon>Methanococcales</taxon>
        <taxon>Methanocaldococcaceae</taxon>
        <taxon>Methanocaldococcus</taxon>
    </lineage>
</organism>